<protein>
    <recommendedName>
        <fullName evidence="1">Porphobilinogen deaminase</fullName>
        <shortName evidence="1">PBG</shortName>
        <ecNumber evidence="1">2.5.1.61</ecNumber>
    </recommendedName>
    <alternativeName>
        <fullName evidence="1">Hydroxymethylbilane synthase</fullName>
        <shortName evidence="1">HMBS</shortName>
    </alternativeName>
    <alternativeName>
        <fullName evidence="1">Pre-uroporphyrinogen synthase</fullName>
    </alternativeName>
</protein>
<gene>
    <name evidence="1" type="primary">hemC</name>
    <name type="ordered locus">BAB1_1887</name>
</gene>
<evidence type="ECO:0000255" key="1">
    <source>
        <dbReference type="HAMAP-Rule" id="MF_00260"/>
    </source>
</evidence>
<keyword id="KW-0627">Porphyrin biosynthesis</keyword>
<keyword id="KW-1185">Reference proteome</keyword>
<keyword id="KW-0808">Transferase</keyword>
<comment type="function">
    <text evidence="1">Tetrapolymerization of the monopyrrole PBG into the hydroxymethylbilane pre-uroporphyrinogen in several discrete steps.</text>
</comment>
<comment type="catalytic activity">
    <reaction evidence="1">
        <text>4 porphobilinogen + H2O = hydroxymethylbilane + 4 NH4(+)</text>
        <dbReference type="Rhea" id="RHEA:13185"/>
        <dbReference type="ChEBI" id="CHEBI:15377"/>
        <dbReference type="ChEBI" id="CHEBI:28938"/>
        <dbReference type="ChEBI" id="CHEBI:57845"/>
        <dbReference type="ChEBI" id="CHEBI:58126"/>
        <dbReference type="EC" id="2.5.1.61"/>
    </reaction>
</comment>
<comment type="cofactor">
    <cofactor evidence="1">
        <name>dipyrromethane</name>
        <dbReference type="ChEBI" id="CHEBI:60342"/>
    </cofactor>
    <text evidence="1">Binds 1 dipyrromethane group covalently.</text>
</comment>
<comment type="pathway">
    <text evidence="1">Porphyrin-containing compound metabolism; protoporphyrin-IX biosynthesis; coproporphyrinogen-III from 5-aminolevulinate: step 2/4.</text>
</comment>
<comment type="subunit">
    <text evidence="1">Monomer.</text>
</comment>
<comment type="miscellaneous">
    <text evidence="1">The porphobilinogen subunits are added to the dipyrromethane group.</text>
</comment>
<comment type="similarity">
    <text evidence="1">Belongs to the HMBS family.</text>
</comment>
<name>HEM3_BRUA2</name>
<proteinExistence type="inferred from homology"/>
<organism>
    <name type="scientific">Brucella abortus (strain 2308)</name>
    <dbReference type="NCBI Taxonomy" id="359391"/>
    <lineage>
        <taxon>Bacteria</taxon>
        <taxon>Pseudomonadati</taxon>
        <taxon>Pseudomonadota</taxon>
        <taxon>Alphaproteobacteria</taxon>
        <taxon>Hyphomicrobiales</taxon>
        <taxon>Brucellaceae</taxon>
        <taxon>Brucella/Ochrobactrum group</taxon>
        <taxon>Brucella</taxon>
    </lineage>
</organism>
<accession>Q2YLM5</accession>
<dbReference type="EC" id="2.5.1.61" evidence="1"/>
<dbReference type="EMBL" id="AM040264">
    <property type="protein sequence ID" value="CAJ11843.1"/>
    <property type="molecule type" value="Genomic_DNA"/>
</dbReference>
<dbReference type="RefSeq" id="WP_002964957.1">
    <property type="nucleotide sequence ID" value="NZ_KN046823.1"/>
</dbReference>
<dbReference type="SMR" id="Q2YLM5"/>
<dbReference type="STRING" id="359391.BAB1_1887"/>
<dbReference type="GeneID" id="93017780"/>
<dbReference type="KEGG" id="bmf:BAB1_1887"/>
<dbReference type="HOGENOM" id="CLU_019704_1_2_5"/>
<dbReference type="UniPathway" id="UPA00251">
    <property type="reaction ID" value="UER00319"/>
</dbReference>
<dbReference type="Proteomes" id="UP000002719">
    <property type="component" value="Chromosome I"/>
</dbReference>
<dbReference type="GO" id="GO:0005737">
    <property type="term" value="C:cytoplasm"/>
    <property type="evidence" value="ECO:0007669"/>
    <property type="project" value="TreeGrafter"/>
</dbReference>
<dbReference type="GO" id="GO:0004418">
    <property type="term" value="F:hydroxymethylbilane synthase activity"/>
    <property type="evidence" value="ECO:0007669"/>
    <property type="project" value="UniProtKB-UniRule"/>
</dbReference>
<dbReference type="GO" id="GO:0006782">
    <property type="term" value="P:protoporphyrinogen IX biosynthetic process"/>
    <property type="evidence" value="ECO:0007669"/>
    <property type="project" value="UniProtKB-UniRule"/>
</dbReference>
<dbReference type="FunFam" id="3.40.190.10:FF:000004">
    <property type="entry name" value="Porphobilinogen deaminase"/>
    <property type="match status" value="1"/>
</dbReference>
<dbReference type="FunFam" id="3.40.190.10:FF:000005">
    <property type="entry name" value="Porphobilinogen deaminase"/>
    <property type="match status" value="1"/>
</dbReference>
<dbReference type="Gene3D" id="3.40.190.10">
    <property type="entry name" value="Periplasmic binding protein-like II"/>
    <property type="match status" value="2"/>
</dbReference>
<dbReference type="Gene3D" id="3.30.160.40">
    <property type="entry name" value="Porphobilinogen deaminase, C-terminal domain"/>
    <property type="match status" value="1"/>
</dbReference>
<dbReference type="HAMAP" id="MF_00260">
    <property type="entry name" value="Porphobil_deam"/>
    <property type="match status" value="1"/>
</dbReference>
<dbReference type="InterPro" id="IPR000860">
    <property type="entry name" value="HemC"/>
</dbReference>
<dbReference type="InterPro" id="IPR022419">
    <property type="entry name" value="Porphobilin_deaminase_cofac_BS"/>
</dbReference>
<dbReference type="InterPro" id="IPR022417">
    <property type="entry name" value="Porphobilin_deaminase_N"/>
</dbReference>
<dbReference type="InterPro" id="IPR022418">
    <property type="entry name" value="Porphobilinogen_deaminase_C"/>
</dbReference>
<dbReference type="InterPro" id="IPR036803">
    <property type="entry name" value="Porphobilinogen_deaminase_C_sf"/>
</dbReference>
<dbReference type="NCBIfam" id="TIGR00212">
    <property type="entry name" value="hemC"/>
    <property type="match status" value="1"/>
</dbReference>
<dbReference type="PANTHER" id="PTHR11557">
    <property type="entry name" value="PORPHOBILINOGEN DEAMINASE"/>
    <property type="match status" value="1"/>
</dbReference>
<dbReference type="PANTHER" id="PTHR11557:SF0">
    <property type="entry name" value="PORPHOBILINOGEN DEAMINASE"/>
    <property type="match status" value="1"/>
</dbReference>
<dbReference type="Pfam" id="PF01379">
    <property type="entry name" value="Porphobil_deam"/>
    <property type="match status" value="1"/>
</dbReference>
<dbReference type="Pfam" id="PF03900">
    <property type="entry name" value="Porphobil_deamC"/>
    <property type="match status" value="1"/>
</dbReference>
<dbReference type="PIRSF" id="PIRSF001438">
    <property type="entry name" value="4pyrrol_synth_OHMeBilane_synth"/>
    <property type="match status" value="1"/>
</dbReference>
<dbReference type="PRINTS" id="PR00151">
    <property type="entry name" value="PORPHBDMNASE"/>
</dbReference>
<dbReference type="SUPFAM" id="SSF53850">
    <property type="entry name" value="Periplasmic binding protein-like II"/>
    <property type="match status" value="1"/>
</dbReference>
<dbReference type="SUPFAM" id="SSF54782">
    <property type="entry name" value="Porphobilinogen deaminase (hydroxymethylbilane synthase), C-terminal domain"/>
    <property type="match status" value="1"/>
</dbReference>
<dbReference type="PROSITE" id="PS00533">
    <property type="entry name" value="PORPHOBILINOGEN_DEAM"/>
    <property type="match status" value="1"/>
</dbReference>
<reference key="1">
    <citation type="journal article" date="2005" name="Infect. Immun.">
        <title>Whole-genome analyses of speciation events in pathogenic Brucellae.</title>
        <authorList>
            <person name="Chain P.S."/>
            <person name="Comerci D.J."/>
            <person name="Tolmasky M.E."/>
            <person name="Larimer F.W."/>
            <person name="Malfatti S.A."/>
            <person name="Vergez L.M."/>
            <person name="Aguero F."/>
            <person name="Land M.L."/>
            <person name="Ugalde R.A."/>
            <person name="Garcia E."/>
        </authorList>
    </citation>
    <scope>NUCLEOTIDE SEQUENCE [LARGE SCALE GENOMIC DNA]</scope>
    <source>
        <strain>2308</strain>
    </source>
</reference>
<feature type="chain" id="PRO_0000304217" description="Porphobilinogen deaminase">
    <location>
        <begin position="1"/>
        <end position="314"/>
    </location>
</feature>
<feature type="modified residue" description="S-(dipyrrolylmethanemethyl)cysteine" evidence="1">
    <location>
        <position position="249"/>
    </location>
</feature>
<sequence length="314" mass="33838">MQTASFKNGTLKIGTRGSKLALAQAYLTRRLLQEAHGLPEDAIEILPMSTAGDRIQDRPLSEVGGKGLFTEEIEQALKDGRIDIAVHSTKDMPTALPEGLHLSVFLEREDPRDAFIGRSARRFMDLPQGATVGSSSLRRQALIRRLRPDIEVVMYRGNVDTRLRKLDAGEVDGTFLACAGLRRLGLADVITDVLDPSVFPPAPGQGAIGIESRIGDERIDVLLAPLAHRETQIALACERAFLGALDGSCRTPIAGLATVEGDRLSFRGMILTPDGRQAHEVTAEGVVSDAAALGTDAANRVRAMAGPHFFDGWQ</sequence>